<comment type="function">
    <text evidence="1">F(1)F(0) ATP synthase produces ATP from ADP in the presence of a proton or sodium gradient. F-type ATPases consist of two structural domains, F(1) containing the extramembraneous catalytic core and F(0) containing the membrane proton channel, linked together by a central stalk and a peripheral stalk. During catalysis, ATP synthesis in the catalytic domain of F(1) is coupled via a rotary mechanism of the central stalk subunits to proton translocation (By similarity).</text>
</comment>
<comment type="function">
    <text evidence="1">Component of the F(0) channel, it forms part of the peripheral stalk, linking F(1) to F(0). The b'-subunit is a diverged and duplicated form of b found in plants and photosynthetic bacteria (By similarity).</text>
</comment>
<comment type="subunit">
    <text evidence="1">F-type ATPases have 2 components, F(1) - the catalytic core - and F(0) - the membrane proton channel. F(1) has five subunits: alpha(3), beta(3), gamma(1), delta(1), epsilon(1). F(0) has three main subunits: a(1), b(2) and c(10-14). The alpha and beta chains form an alternating ring which encloses part of the gamma chain. F(1) is attached to F(0) by a central stalk formed by the gamma and epsilon chains, while a peripheral stalk is formed by the delta and b chains (By similarity).</text>
</comment>
<comment type="subcellular location">
    <subcellularLocation>
        <location evidence="1">Cell inner membrane</location>
        <topology evidence="1">Single-pass membrane protein</topology>
    </subcellularLocation>
</comment>
<comment type="similarity">
    <text evidence="4">Belongs to the ATPase B chain family.</text>
</comment>
<protein>
    <recommendedName>
        <fullName>ATP synthase subunit b 2</fullName>
    </recommendedName>
    <alternativeName>
        <fullName>ATP synthase F(0) sector subunit b 2</fullName>
    </alternativeName>
    <alternativeName>
        <fullName>ATPase subunit I 2</fullName>
    </alternativeName>
    <alternativeName>
        <fullName>F-type ATPase subunit b 2</fullName>
        <shortName>F-ATPase subunit b 2</shortName>
    </alternativeName>
</protein>
<dbReference type="EMBL" id="CP001029">
    <property type="protein sequence ID" value="ACB81519.1"/>
    <property type="molecule type" value="Genomic_DNA"/>
</dbReference>
<dbReference type="RefSeq" id="WP_012455236.1">
    <property type="nucleotide sequence ID" value="NC_010725.1"/>
</dbReference>
<dbReference type="SMR" id="B1ZJN3"/>
<dbReference type="STRING" id="441620.Mpop_3368"/>
<dbReference type="KEGG" id="mpo:Mpop_3368"/>
<dbReference type="eggNOG" id="COG0711">
    <property type="taxonomic scope" value="Bacteria"/>
</dbReference>
<dbReference type="HOGENOM" id="CLU_079215_1_2_5"/>
<dbReference type="OrthoDB" id="9805716at2"/>
<dbReference type="Proteomes" id="UP000007136">
    <property type="component" value="Chromosome"/>
</dbReference>
<dbReference type="GO" id="GO:0005886">
    <property type="term" value="C:plasma membrane"/>
    <property type="evidence" value="ECO:0007669"/>
    <property type="project" value="UniProtKB-SubCell"/>
</dbReference>
<dbReference type="GO" id="GO:0045259">
    <property type="term" value="C:proton-transporting ATP synthase complex"/>
    <property type="evidence" value="ECO:0007669"/>
    <property type="project" value="UniProtKB-KW"/>
</dbReference>
<dbReference type="GO" id="GO:0046933">
    <property type="term" value="F:proton-transporting ATP synthase activity, rotational mechanism"/>
    <property type="evidence" value="ECO:0007669"/>
    <property type="project" value="UniProtKB-UniRule"/>
</dbReference>
<dbReference type="GO" id="GO:0046961">
    <property type="term" value="F:proton-transporting ATPase activity, rotational mechanism"/>
    <property type="evidence" value="ECO:0007669"/>
    <property type="project" value="TreeGrafter"/>
</dbReference>
<dbReference type="CDD" id="cd06503">
    <property type="entry name" value="ATP-synt_Fo_b"/>
    <property type="match status" value="1"/>
</dbReference>
<dbReference type="HAMAP" id="MF_01398">
    <property type="entry name" value="ATP_synth_b_bprime"/>
    <property type="match status" value="1"/>
</dbReference>
<dbReference type="InterPro" id="IPR002146">
    <property type="entry name" value="ATP_synth_b/b'su_bac/chlpt"/>
</dbReference>
<dbReference type="InterPro" id="IPR050059">
    <property type="entry name" value="ATP_synthase_B_chain"/>
</dbReference>
<dbReference type="PANTHER" id="PTHR33445:SF1">
    <property type="entry name" value="ATP SYNTHASE SUBUNIT B"/>
    <property type="match status" value="1"/>
</dbReference>
<dbReference type="PANTHER" id="PTHR33445">
    <property type="entry name" value="ATP SYNTHASE SUBUNIT B', CHLOROPLASTIC"/>
    <property type="match status" value="1"/>
</dbReference>
<dbReference type="Pfam" id="PF00430">
    <property type="entry name" value="ATP-synt_B"/>
    <property type="match status" value="1"/>
</dbReference>
<keyword id="KW-0066">ATP synthesis</keyword>
<keyword id="KW-0997">Cell inner membrane</keyword>
<keyword id="KW-1003">Cell membrane</keyword>
<keyword id="KW-0138">CF(0)</keyword>
<keyword id="KW-0375">Hydrogen ion transport</keyword>
<keyword id="KW-0406">Ion transport</keyword>
<keyword id="KW-0472">Membrane</keyword>
<keyword id="KW-0812">Transmembrane</keyword>
<keyword id="KW-1133">Transmembrane helix</keyword>
<keyword id="KW-0813">Transport</keyword>
<reference key="1">
    <citation type="submission" date="2008-04" db="EMBL/GenBank/DDBJ databases">
        <title>Complete sequence of chromosome of Methylobacterium populi BJ001.</title>
        <authorList>
            <consortium name="US DOE Joint Genome Institute"/>
            <person name="Copeland A."/>
            <person name="Lucas S."/>
            <person name="Lapidus A."/>
            <person name="Glavina del Rio T."/>
            <person name="Dalin E."/>
            <person name="Tice H."/>
            <person name="Bruce D."/>
            <person name="Goodwin L."/>
            <person name="Pitluck S."/>
            <person name="Chertkov O."/>
            <person name="Brettin T."/>
            <person name="Detter J.C."/>
            <person name="Han C."/>
            <person name="Kuske C.R."/>
            <person name="Schmutz J."/>
            <person name="Larimer F."/>
            <person name="Land M."/>
            <person name="Hauser L."/>
            <person name="Kyrpides N."/>
            <person name="Mikhailova N."/>
            <person name="Marx C."/>
            <person name="Richardson P."/>
        </authorList>
    </citation>
    <scope>NUCLEOTIDE SEQUENCE [LARGE SCALE GENOMIC DNA]</scope>
    <source>
        <strain>ATCC BAA-705 / NCIMB 13946 / BJ001</strain>
    </source>
</reference>
<accession>B1ZJN3</accession>
<evidence type="ECO:0000250" key="1"/>
<evidence type="ECO:0000255" key="2"/>
<evidence type="ECO:0000256" key="3">
    <source>
        <dbReference type="SAM" id="MobiDB-lite"/>
    </source>
</evidence>
<evidence type="ECO:0000305" key="4"/>
<organism>
    <name type="scientific">Methylorubrum populi (strain ATCC BAA-705 / NCIMB 13946 / BJ001)</name>
    <name type="common">Methylobacterium populi</name>
    <dbReference type="NCBI Taxonomy" id="441620"/>
    <lineage>
        <taxon>Bacteria</taxon>
        <taxon>Pseudomonadati</taxon>
        <taxon>Pseudomonadota</taxon>
        <taxon>Alphaproteobacteria</taxon>
        <taxon>Hyphomicrobiales</taxon>
        <taxon>Methylobacteriaceae</taxon>
        <taxon>Methylorubrum</taxon>
    </lineage>
</organism>
<feature type="chain" id="PRO_0000369012" description="ATP synthase subunit b 2">
    <location>
        <begin position="1"/>
        <end position="200"/>
    </location>
</feature>
<feature type="transmembrane region" description="Helical" evidence="2">
    <location>
        <begin position="46"/>
        <end position="66"/>
    </location>
</feature>
<feature type="region of interest" description="Disordered" evidence="3">
    <location>
        <begin position="1"/>
        <end position="38"/>
    </location>
</feature>
<feature type="compositionally biased region" description="Polar residues" evidence="3">
    <location>
        <begin position="1"/>
        <end position="16"/>
    </location>
</feature>
<proteinExistence type="inferred from homology"/>
<gene>
    <name type="primary">atpF2</name>
    <name type="synonym">atpG</name>
    <name type="ordered locus">Mpop_3368</name>
</gene>
<sequence length="200" mass="21184">MAEQNILTTPSPNADTTIVPPGSPHTHTEQPSGGHGGAFPPFESHTFLAQLIWLALAFGLLYYLMSKVALPRIEAILGDRAGRLSSDLNEAQRMKAEADAAGAAYETSLREAQAKAQAIAQETRNSLSAEADAKRKTLEAELNQRLAASEATIRARTSEAMGNVRTIAGETASAIVERLTGQAPDQASLNRALDATPAVH</sequence>
<name>ATPF2_METPB</name>